<organism>
    <name type="scientific">Helicobacter pylori (strain J99 / ATCC 700824)</name>
    <name type="common">Campylobacter pylori J99</name>
    <dbReference type="NCBI Taxonomy" id="85963"/>
    <lineage>
        <taxon>Bacteria</taxon>
        <taxon>Pseudomonadati</taxon>
        <taxon>Campylobacterota</taxon>
        <taxon>Epsilonproteobacteria</taxon>
        <taxon>Campylobacterales</taxon>
        <taxon>Helicobacteraceae</taxon>
        <taxon>Helicobacter</taxon>
    </lineage>
</organism>
<gene>
    <name type="primary">ftsW</name>
    <name type="ordered locus">jhp_1468</name>
</gene>
<accession>Q9ZJ48</accession>
<feature type="chain" id="PRO_0000062706" description="Probable peptidoglycan glycosyltransferase FtsW">
    <location>
        <begin position="1"/>
        <end position="388"/>
    </location>
</feature>
<feature type="topological domain" description="Cytoplasmic" evidence="4">
    <location>
        <begin position="1"/>
        <end position="6"/>
    </location>
</feature>
<feature type="transmembrane region" description="Helical" evidence="4">
    <location>
        <begin position="7"/>
        <end position="27"/>
    </location>
</feature>
<feature type="topological domain" description="Periplasmic" evidence="4">
    <location>
        <begin position="28"/>
        <end position="38"/>
    </location>
</feature>
<feature type="transmembrane region" description="Helical" evidence="4">
    <location>
        <begin position="39"/>
        <end position="59"/>
    </location>
</feature>
<feature type="topological domain" description="Cytoplasmic" evidence="4">
    <location>
        <begin position="60"/>
        <end position="70"/>
    </location>
</feature>
<feature type="transmembrane region" description="Helical" evidence="4">
    <location>
        <begin position="71"/>
        <end position="91"/>
    </location>
</feature>
<feature type="topological domain" description="Periplasmic" evidence="4">
    <location>
        <begin position="92"/>
        <end position="105"/>
    </location>
</feature>
<feature type="transmembrane region" description="Helical" evidence="4">
    <location>
        <begin position="106"/>
        <end position="126"/>
    </location>
</feature>
<feature type="topological domain" description="Cytoplasmic" evidence="4">
    <location>
        <begin position="127"/>
        <end position="144"/>
    </location>
</feature>
<feature type="transmembrane region" description="Helical" evidence="4">
    <location>
        <begin position="145"/>
        <end position="165"/>
    </location>
</feature>
<feature type="topological domain" description="Periplasmic" evidence="4">
    <location>
        <begin position="166"/>
        <end position="168"/>
    </location>
</feature>
<feature type="transmembrane region" description="Helical" evidence="4">
    <location>
        <begin position="169"/>
        <end position="186"/>
    </location>
</feature>
<feature type="topological domain" description="Cytoplasmic" evidence="4">
    <location>
        <position position="187"/>
    </location>
</feature>
<feature type="transmembrane region" description="Helical" evidence="4">
    <location>
        <begin position="188"/>
        <end position="210"/>
    </location>
</feature>
<feature type="topological domain" description="Periplasmic" evidence="4">
    <location>
        <begin position="211"/>
        <end position="294"/>
    </location>
</feature>
<feature type="transmembrane region" description="Helical" evidence="4">
    <location>
        <begin position="295"/>
        <end position="315"/>
    </location>
</feature>
<feature type="topological domain" description="Cytoplasmic" evidence="4">
    <location>
        <begin position="316"/>
        <end position="327"/>
    </location>
</feature>
<feature type="transmembrane region" description="Helical" evidence="4">
    <location>
        <begin position="328"/>
        <end position="348"/>
    </location>
</feature>
<feature type="topological domain" description="Periplasmic" evidence="4">
    <location>
        <begin position="349"/>
        <end position="358"/>
    </location>
</feature>
<feature type="transmembrane region" description="Helical" evidence="4">
    <location>
        <begin position="359"/>
        <end position="379"/>
    </location>
</feature>
<feature type="topological domain" description="Cytoplasmic" evidence="4">
    <location>
        <begin position="380"/>
        <end position="388"/>
    </location>
</feature>
<comment type="function">
    <text evidence="3">Peptidoglycan polymerase that is essential for cell division.</text>
</comment>
<comment type="catalytic activity">
    <reaction evidence="3">
        <text>[GlcNAc-(1-&gt;4)-Mur2Ac(oyl-L-Ala-gamma-D-Glu-L-Lys-D-Ala-D-Ala)](n)-di-trans,octa-cis-undecaprenyl diphosphate + beta-D-GlcNAc-(1-&gt;4)-Mur2Ac(oyl-L-Ala-gamma-D-Glu-L-Lys-D-Ala-D-Ala)-di-trans,octa-cis-undecaprenyl diphosphate = [GlcNAc-(1-&gt;4)-Mur2Ac(oyl-L-Ala-gamma-D-Glu-L-Lys-D-Ala-D-Ala)](n+1)-di-trans,octa-cis-undecaprenyl diphosphate + di-trans,octa-cis-undecaprenyl diphosphate + H(+)</text>
        <dbReference type="Rhea" id="RHEA:23708"/>
        <dbReference type="Rhea" id="RHEA-COMP:9602"/>
        <dbReference type="Rhea" id="RHEA-COMP:9603"/>
        <dbReference type="ChEBI" id="CHEBI:15378"/>
        <dbReference type="ChEBI" id="CHEBI:58405"/>
        <dbReference type="ChEBI" id="CHEBI:60033"/>
        <dbReference type="ChEBI" id="CHEBI:78435"/>
        <dbReference type="EC" id="2.4.99.28"/>
    </reaction>
</comment>
<comment type="pathway">
    <text evidence="3">Cell wall biogenesis; peptidoglycan biosynthesis.</text>
</comment>
<comment type="subcellular location">
    <subcellularLocation>
        <location evidence="1">Cell inner membrane</location>
        <topology evidence="4">Multi-pass membrane protein</topology>
    </subcellularLocation>
    <text evidence="1">Localizes to the division septum.</text>
</comment>
<comment type="similarity">
    <text evidence="5">Belongs to the SEDS family. FtsW subfamily.</text>
</comment>
<reference key="1">
    <citation type="journal article" date="1999" name="Nature">
        <title>Genomic sequence comparison of two unrelated isolates of the human gastric pathogen Helicobacter pylori.</title>
        <authorList>
            <person name="Alm R.A."/>
            <person name="Ling L.-S.L."/>
            <person name="Moir D.T."/>
            <person name="King B.L."/>
            <person name="Brown E.D."/>
            <person name="Doig P.C."/>
            <person name="Smith D.R."/>
            <person name="Noonan B."/>
            <person name="Guild B.C."/>
            <person name="deJonge B.L."/>
            <person name="Carmel G."/>
            <person name="Tummino P.J."/>
            <person name="Caruso A."/>
            <person name="Uria-Nickelsen M."/>
            <person name="Mills D.M."/>
            <person name="Ives C."/>
            <person name="Gibson R."/>
            <person name="Merberg D."/>
            <person name="Mills S.D."/>
            <person name="Jiang Q."/>
            <person name="Taylor D.E."/>
            <person name="Vovis G.F."/>
            <person name="Trust T.J."/>
        </authorList>
    </citation>
    <scope>NUCLEOTIDE SEQUENCE [LARGE SCALE GENOMIC DNA]</scope>
    <source>
        <strain>J99 / ATCC 700824</strain>
    </source>
</reference>
<proteinExistence type="inferred from homology"/>
<name>FTSW_HELPJ</name>
<dbReference type="EC" id="2.4.99.28" evidence="3"/>
<dbReference type="EMBL" id="AE001439">
    <property type="protein sequence ID" value="AAD07042.1"/>
    <property type="molecule type" value="Genomic_DNA"/>
</dbReference>
<dbReference type="PIR" id="D71804">
    <property type="entry name" value="D71804"/>
</dbReference>
<dbReference type="RefSeq" id="WP_000205902.1">
    <property type="nucleotide sequence ID" value="NC_000921.1"/>
</dbReference>
<dbReference type="SMR" id="Q9ZJ48"/>
<dbReference type="KEGG" id="hpj:jhp_1468"/>
<dbReference type="PATRIC" id="fig|85963.30.peg.1074"/>
<dbReference type="eggNOG" id="COG0772">
    <property type="taxonomic scope" value="Bacteria"/>
</dbReference>
<dbReference type="UniPathway" id="UPA00219"/>
<dbReference type="Proteomes" id="UP000000804">
    <property type="component" value="Chromosome"/>
</dbReference>
<dbReference type="GO" id="GO:0032153">
    <property type="term" value="C:cell division site"/>
    <property type="evidence" value="ECO:0007669"/>
    <property type="project" value="TreeGrafter"/>
</dbReference>
<dbReference type="GO" id="GO:0005886">
    <property type="term" value="C:plasma membrane"/>
    <property type="evidence" value="ECO:0007669"/>
    <property type="project" value="UniProtKB-SubCell"/>
</dbReference>
<dbReference type="GO" id="GO:0015648">
    <property type="term" value="F:lipid-linked peptidoglycan transporter activity"/>
    <property type="evidence" value="ECO:0007669"/>
    <property type="project" value="TreeGrafter"/>
</dbReference>
<dbReference type="GO" id="GO:0008955">
    <property type="term" value="F:peptidoglycan glycosyltransferase activity"/>
    <property type="evidence" value="ECO:0007669"/>
    <property type="project" value="RHEA"/>
</dbReference>
<dbReference type="GO" id="GO:0051301">
    <property type="term" value="P:cell division"/>
    <property type="evidence" value="ECO:0007669"/>
    <property type="project" value="UniProtKB-KW"/>
</dbReference>
<dbReference type="GO" id="GO:0071555">
    <property type="term" value="P:cell wall organization"/>
    <property type="evidence" value="ECO:0007669"/>
    <property type="project" value="UniProtKB-KW"/>
</dbReference>
<dbReference type="GO" id="GO:0009252">
    <property type="term" value="P:peptidoglycan biosynthetic process"/>
    <property type="evidence" value="ECO:0007669"/>
    <property type="project" value="UniProtKB-UniPathway"/>
</dbReference>
<dbReference type="GO" id="GO:0008360">
    <property type="term" value="P:regulation of cell shape"/>
    <property type="evidence" value="ECO:0007669"/>
    <property type="project" value="UniProtKB-KW"/>
</dbReference>
<dbReference type="InterPro" id="IPR018365">
    <property type="entry name" value="Cell_cycle_FtsW-rel_CS"/>
</dbReference>
<dbReference type="InterPro" id="IPR001182">
    <property type="entry name" value="FtsW/RodA"/>
</dbReference>
<dbReference type="PANTHER" id="PTHR30474">
    <property type="entry name" value="CELL CYCLE PROTEIN"/>
    <property type="match status" value="1"/>
</dbReference>
<dbReference type="PANTHER" id="PTHR30474:SF2">
    <property type="entry name" value="PEPTIDOGLYCAN GLYCOSYLTRANSFERASE FTSW-RELATED"/>
    <property type="match status" value="1"/>
</dbReference>
<dbReference type="Pfam" id="PF01098">
    <property type="entry name" value="FTSW_RODA_SPOVE"/>
    <property type="match status" value="1"/>
</dbReference>
<dbReference type="PROSITE" id="PS00428">
    <property type="entry name" value="FTSW_RODA_SPOVE"/>
    <property type="match status" value="1"/>
</dbReference>
<protein>
    <recommendedName>
        <fullName evidence="3">Probable peptidoglycan glycosyltransferase FtsW</fullName>
        <shortName evidence="3">PGT</shortName>
        <ecNumber evidence="3">2.4.99.28</ecNumber>
    </recommendedName>
    <alternativeName>
        <fullName evidence="2">Cell division protein FtsW</fullName>
    </alternativeName>
    <alternativeName>
        <fullName evidence="3">Cell wall polymerase</fullName>
    </alternativeName>
    <alternativeName>
        <fullName evidence="3">Peptidoglycan polymerase</fullName>
        <shortName evidence="3">PG polymerase</shortName>
    </alternativeName>
</protein>
<evidence type="ECO:0000250" key="1"/>
<evidence type="ECO:0000250" key="2">
    <source>
        <dbReference type="UniProtKB" id="O07639"/>
    </source>
</evidence>
<evidence type="ECO:0000250" key="3">
    <source>
        <dbReference type="UniProtKB" id="P39604"/>
    </source>
</evidence>
<evidence type="ECO:0000255" key="4"/>
<evidence type="ECO:0000305" key="5"/>
<sequence>MTTDRNLFFCASLLIFLGVLMSYSLSTYTTVVLYHYGEFHFFIRQLVSAIMGIIIMWGLSRVDPRKWFSRLGFFLLFVPSLLIIGMFFLPESLSSSAGGAKRWIRLGFFSLAPLEFLKIGFTFFLAWSLSRTFVAKEKANVKEELITFVPYSFVFVALAIGVGVLQNDLGQIVLLGAVLAVLLVFSGGSVHLFGLIVSGAFAISVLAIVTSEHRILRLKLWWSNLQNSLFTLLPDKLANALRISDLPESYQVFHAGNAMHNGGLLGQGLGLGQIKLGFLSEVHTDMVLAGIAEEWGFLGLCVCFILFSVMIVLIFRIANRLKEPKYSLFCVGVVLLIGFSLVINAFGVGGIFPVKGLAVPFLSYGGSSLLANCIAIGLVLSLARYTKG</sequence>
<keyword id="KW-0131">Cell cycle</keyword>
<keyword id="KW-0132">Cell division</keyword>
<keyword id="KW-0997">Cell inner membrane</keyword>
<keyword id="KW-1003">Cell membrane</keyword>
<keyword id="KW-0133">Cell shape</keyword>
<keyword id="KW-0961">Cell wall biogenesis/degradation</keyword>
<keyword id="KW-0328">Glycosyltransferase</keyword>
<keyword id="KW-0472">Membrane</keyword>
<keyword id="KW-0573">Peptidoglycan synthesis</keyword>
<keyword id="KW-0808">Transferase</keyword>
<keyword id="KW-0812">Transmembrane</keyword>
<keyword id="KW-1133">Transmembrane helix</keyword>